<evidence type="ECO:0000305" key="1"/>
<evidence type="ECO:0007744" key="2">
    <source>
    </source>
</evidence>
<evidence type="ECO:0007744" key="3">
    <source>
    </source>
</evidence>
<evidence type="ECO:0007744" key="4">
    <source>
    </source>
</evidence>
<evidence type="ECO:0007744" key="5">
    <source>
    </source>
</evidence>
<dbReference type="EMBL" id="BC062731">
    <property type="protein sequence ID" value="AAH62731.1"/>
    <property type="status" value="ALT_INIT"/>
    <property type="molecule type" value="mRNA"/>
</dbReference>
<dbReference type="EMBL" id="BC107708">
    <property type="protein sequence ID" value="AAI07709.1"/>
    <property type="molecule type" value="mRNA"/>
</dbReference>
<dbReference type="CCDS" id="CCDS46955.1"/>
<dbReference type="RefSeq" id="NP_001093115.1">
    <property type="nucleotide sequence ID" value="NM_001099645.2"/>
</dbReference>
<dbReference type="SMR" id="Q6P5R6"/>
<dbReference type="BioGRID" id="128356">
    <property type="interactions" value="84"/>
</dbReference>
<dbReference type="ComplexPortal" id="CPX-5183">
    <property type="entry name" value="60S cytosolic large ribosomal subunit"/>
</dbReference>
<dbReference type="ComplexPortal" id="CPX-7664">
    <property type="entry name" value="60S cytosolic large ribosomal subunit, testis-specific variant"/>
</dbReference>
<dbReference type="ComplexPortal" id="CPX-7665">
    <property type="entry name" value="60S cytosolic large ribosomal subunit, striated muscle variant"/>
</dbReference>
<dbReference type="FunCoup" id="Q6P5R6">
    <property type="interactions" value="1338"/>
</dbReference>
<dbReference type="IntAct" id="Q6P5R6">
    <property type="interactions" value="32"/>
</dbReference>
<dbReference type="MINT" id="Q6P5R6"/>
<dbReference type="STRING" id="9606.ENSP00000346080"/>
<dbReference type="GlyGen" id="Q6P5R6">
    <property type="glycosylation" value="1 site, 1 O-linked glycan (1 site)"/>
</dbReference>
<dbReference type="iPTMnet" id="Q6P5R6"/>
<dbReference type="PhosphoSitePlus" id="Q6P5R6"/>
<dbReference type="BioMuta" id="RPL22L1"/>
<dbReference type="DMDM" id="109893176"/>
<dbReference type="jPOST" id="Q6P5R6"/>
<dbReference type="MassIVE" id="Q6P5R6"/>
<dbReference type="PaxDb" id="9606-ENSP00000346080"/>
<dbReference type="PeptideAtlas" id="Q6P5R6"/>
<dbReference type="ProteomicsDB" id="67002"/>
<dbReference type="Pumba" id="Q6P5R6"/>
<dbReference type="Antibodypedia" id="71210">
    <property type="antibodies" value="52 antibodies from 15 providers"/>
</dbReference>
<dbReference type="DNASU" id="200916"/>
<dbReference type="Ensembl" id="ENST00000295830.13">
    <property type="protein sequence ID" value="ENSP00000346080.7"/>
    <property type="gene ID" value="ENSG00000163584.18"/>
</dbReference>
<dbReference type="GeneID" id="200916"/>
<dbReference type="KEGG" id="hsa:200916"/>
<dbReference type="MANE-Select" id="ENST00000295830.13">
    <property type="protein sequence ID" value="ENSP00000346080.7"/>
    <property type="RefSeq nucleotide sequence ID" value="NM_001099645.2"/>
    <property type="RefSeq protein sequence ID" value="NP_001093115.1"/>
</dbReference>
<dbReference type="UCSC" id="uc003fhc.5">
    <property type="organism name" value="human"/>
</dbReference>
<dbReference type="AGR" id="HGNC:27610"/>
<dbReference type="CTD" id="200916"/>
<dbReference type="DisGeNET" id="200916"/>
<dbReference type="GeneCards" id="RPL22L1"/>
<dbReference type="HGNC" id="HGNC:27610">
    <property type="gene designation" value="RPL22L1"/>
</dbReference>
<dbReference type="HPA" id="ENSG00000163584">
    <property type="expression patterns" value="Low tissue specificity"/>
</dbReference>
<dbReference type="neXtProt" id="NX_Q6P5R6"/>
<dbReference type="OpenTargets" id="ENSG00000163584"/>
<dbReference type="PharmGKB" id="PA142671026"/>
<dbReference type="VEuPathDB" id="HostDB:ENSG00000163584"/>
<dbReference type="eggNOG" id="KOG3434">
    <property type="taxonomic scope" value="Eukaryota"/>
</dbReference>
<dbReference type="GeneTree" id="ENSGT00940000154509"/>
<dbReference type="InParanoid" id="Q6P5R6"/>
<dbReference type="OMA" id="WIRFIST"/>
<dbReference type="OrthoDB" id="10259820at2759"/>
<dbReference type="PAN-GO" id="Q6P5R6">
    <property type="GO annotations" value="3 GO annotations based on evolutionary models"/>
</dbReference>
<dbReference type="PhylomeDB" id="Q6P5R6"/>
<dbReference type="TreeFam" id="TF313018"/>
<dbReference type="PathwayCommons" id="Q6P5R6"/>
<dbReference type="Reactome" id="R-HSA-156827">
    <property type="pathway name" value="L13a-mediated translational silencing of Ceruloplasmin expression"/>
</dbReference>
<dbReference type="Reactome" id="R-HSA-156902">
    <property type="pathway name" value="Peptide chain elongation"/>
</dbReference>
<dbReference type="Reactome" id="R-HSA-1799339">
    <property type="pathway name" value="SRP-dependent cotranslational protein targeting to membrane"/>
</dbReference>
<dbReference type="Reactome" id="R-HSA-192823">
    <property type="pathway name" value="Viral mRNA Translation"/>
</dbReference>
<dbReference type="Reactome" id="R-HSA-2408557">
    <property type="pathway name" value="Selenocysteine synthesis"/>
</dbReference>
<dbReference type="Reactome" id="R-HSA-6791226">
    <property type="pathway name" value="Major pathway of rRNA processing in the nucleolus and cytosol"/>
</dbReference>
<dbReference type="Reactome" id="R-HSA-72689">
    <property type="pathway name" value="Formation of a pool of free 40S subunits"/>
</dbReference>
<dbReference type="Reactome" id="R-HSA-72706">
    <property type="pathway name" value="GTP hydrolysis and joining of the 60S ribosomal subunit"/>
</dbReference>
<dbReference type="Reactome" id="R-HSA-72764">
    <property type="pathway name" value="Eukaryotic Translation Termination"/>
</dbReference>
<dbReference type="Reactome" id="R-HSA-9010553">
    <property type="pathway name" value="Regulation of expression of SLITs and ROBOs"/>
</dbReference>
<dbReference type="Reactome" id="R-HSA-9633012">
    <property type="pathway name" value="Response of EIF2AK4 (GCN2) to amino acid deficiency"/>
</dbReference>
<dbReference type="Reactome" id="R-HSA-975956">
    <property type="pathway name" value="Nonsense Mediated Decay (NMD) independent of the Exon Junction Complex (EJC)"/>
</dbReference>
<dbReference type="Reactome" id="R-HSA-975957">
    <property type="pathway name" value="Nonsense Mediated Decay (NMD) enhanced by the Exon Junction Complex (EJC)"/>
</dbReference>
<dbReference type="SignaLink" id="Q6P5R6"/>
<dbReference type="SIGNOR" id="Q6P5R6"/>
<dbReference type="BioGRID-ORCS" id="200916">
    <property type="hits" value="97 hits in 1152 CRISPR screens"/>
</dbReference>
<dbReference type="ChiTaRS" id="RPL22L1">
    <property type="organism name" value="human"/>
</dbReference>
<dbReference type="GenomeRNAi" id="200916"/>
<dbReference type="Pharos" id="Q6P5R6">
    <property type="development level" value="Tdark"/>
</dbReference>
<dbReference type="PRO" id="PR:Q6P5R6"/>
<dbReference type="Proteomes" id="UP000005640">
    <property type="component" value="Chromosome 3"/>
</dbReference>
<dbReference type="RNAct" id="Q6P5R6">
    <property type="molecule type" value="protein"/>
</dbReference>
<dbReference type="Bgee" id="ENSG00000163584">
    <property type="expression patterns" value="Expressed in cartilage tissue and 182 other cell types or tissues"/>
</dbReference>
<dbReference type="ExpressionAtlas" id="Q6P5R6">
    <property type="expression patterns" value="baseline and differential"/>
</dbReference>
<dbReference type="GO" id="GO:1990904">
    <property type="term" value="C:ribonucleoprotein complex"/>
    <property type="evidence" value="ECO:0007669"/>
    <property type="project" value="UniProtKB-KW"/>
</dbReference>
<dbReference type="GO" id="GO:0005840">
    <property type="term" value="C:ribosome"/>
    <property type="evidence" value="ECO:0007669"/>
    <property type="project" value="UniProtKB-KW"/>
</dbReference>
<dbReference type="GO" id="GO:0003723">
    <property type="term" value="F:RNA binding"/>
    <property type="evidence" value="ECO:0000318"/>
    <property type="project" value="GO_Central"/>
</dbReference>
<dbReference type="GO" id="GO:0003735">
    <property type="term" value="F:structural constituent of ribosome"/>
    <property type="evidence" value="ECO:0000318"/>
    <property type="project" value="GO_Central"/>
</dbReference>
<dbReference type="GO" id="GO:0002181">
    <property type="term" value="P:cytoplasmic translation"/>
    <property type="evidence" value="ECO:0000318"/>
    <property type="project" value="GO_Central"/>
</dbReference>
<dbReference type="FunFam" id="3.30.1360.210:FF:000001">
    <property type="entry name" value="60S ribosomal protein L22 1"/>
    <property type="match status" value="1"/>
</dbReference>
<dbReference type="Gene3D" id="3.30.1360.210">
    <property type="match status" value="1"/>
</dbReference>
<dbReference type="InterPro" id="IPR002671">
    <property type="entry name" value="Ribosomal_eL22"/>
</dbReference>
<dbReference type="InterPro" id="IPR038526">
    <property type="entry name" value="Ribosomal_eL22_sf"/>
</dbReference>
<dbReference type="PANTHER" id="PTHR10064">
    <property type="entry name" value="60S RIBOSOMAL PROTEIN L22"/>
    <property type="match status" value="1"/>
</dbReference>
<dbReference type="PANTHER" id="PTHR10064:SF1">
    <property type="entry name" value="RIBOSOMAL PROTEIN EL22-LIKE"/>
    <property type="match status" value="1"/>
</dbReference>
<dbReference type="Pfam" id="PF01776">
    <property type="entry name" value="Ribosomal_L22e"/>
    <property type="match status" value="1"/>
</dbReference>
<reference key="1">
    <citation type="journal article" date="2004" name="Genome Res.">
        <title>The status, quality, and expansion of the NIH full-length cDNA project: the Mammalian Gene Collection (MGC).</title>
        <authorList>
            <consortium name="The MGC Project Team"/>
        </authorList>
    </citation>
    <scope>NUCLEOTIDE SEQUENCE [LARGE SCALE MRNA]</scope>
    <source>
        <tissue>Testis</tissue>
    </source>
</reference>
<reference key="2">
    <citation type="journal article" date="2008" name="Proc. Natl. Acad. Sci. U.S.A.">
        <title>A quantitative atlas of mitotic phosphorylation.</title>
        <authorList>
            <person name="Dephoure N."/>
            <person name="Zhou C."/>
            <person name="Villen J."/>
            <person name="Beausoleil S.A."/>
            <person name="Bakalarski C.E."/>
            <person name="Elledge S.J."/>
            <person name="Gygi S.P."/>
        </authorList>
    </citation>
    <scope>PHOSPHORYLATION [LARGE SCALE ANALYSIS] AT SER-118 AND SER-120</scope>
    <scope>IDENTIFICATION BY MASS SPECTROMETRY [LARGE SCALE ANALYSIS]</scope>
    <source>
        <tissue>Cervix carcinoma</tissue>
    </source>
</reference>
<reference key="3">
    <citation type="journal article" date="2009" name="Anal. Chem.">
        <title>Lys-N and trypsin cover complementary parts of the phosphoproteome in a refined SCX-based approach.</title>
        <authorList>
            <person name="Gauci S."/>
            <person name="Helbig A.O."/>
            <person name="Slijper M."/>
            <person name="Krijgsveld J."/>
            <person name="Heck A.J."/>
            <person name="Mohammed S."/>
        </authorList>
    </citation>
    <scope>IDENTIFICATION BY MASS SPECTROMETRY [LARGE SCALE ANALYSIS]</scope>
</reference>
<reference key="4">
    <citation type="journal article" date="2009" name="Mol. Cell. Proteomics">
        <title>Large-scale proteomics analysis of the human kinome.</title>
        <authorList>
            <person name="Oppermann F.S."/>
            <person name="Gnad F."/>
            <person name="Olsen J.V."/>
            <person name="Hornberger R."/>
            <person name="Greff Z."/>
            <person name="Keri G."/>
            <person name="Mann M."/>
            <person name="Daub H."/>
        </authorList>
    </citation>
    <scope>IDENTIFICATION BY MASS SPECTROMETRY [LARGE SCALE ANALYSIS]</scope>
</reference>
<reference key="5">
    <citation type="journal article" date="2009" name="Sci. Signal.">
        <title>Quantitative phosphoproteomic analysis of T cell receptor signaling reveals system-wide modulation of protein-protein interactions.</title>
        <authorList>
            <person name="Mayya V."/>
            <person name="Lundgren D.H."/>
            <person name="Hwang S.-I."/>
            <person name="Rezaul K."/>
            <person name="Wu L."/>
            <person name="Eng J.K."/>
            <person name="Rodionov V."/>
            <person name="Han D.K."/>
        </authorList>
    </citation>
    <scope>PHOSPHORYLATION [LARGE SCALE ANALYSIS] AT SER-118</scope>
    <scope>IDENTIFICATION BY MASS SPECTROMETRY [LARGE SCALE ANALYSIS]</scope>
    <source>
        <tissue>Leukemic T-cell</tissue>
    </source>
</reference>
<reference key="6">
    <citation type="journal article" date="2010" name="Sci. Signal.">
        <title>Quantitative phosphoproteomics reveals widespread full phosphorylation site occupancy during mitosis.</title>
        <authorList>
            <person name="Olsen J.V."/>
            <person name="Vermeulen M."/>
            <person name="Santamaria A."/>
            <person name="Kumar C."/>
            <person name="Miller M.L."/>
            <person name="Jensen L.J."/>
            <person name="Gnad F."/>
            <person name="Cox J."/>
            <person name="Jensen T.S."/>
            <person name="Nigg E.A."/>
            <person name="Brunak S."/>
            <person name="Mann M."/>
        </authorList>
    </citation>
    <scope>PHOSPHORYLATION [LARGE SCALE ANALYSIS] AT SER-112 AND SER-118</scope>
    <scope>IDENTIFICATION BY MASS SPECTROMETRY [LARGE SCALE ANALYSIS]</scope>
    <source>
        <tissue>Cervix carcinoma</tissue>
    </source>
</reference>
<reference key="7">
    <citation type="journal article" date="2011" name="BMC Syst. Biol.">
        <title>Initial characterization of the human central proteome.</title>
        <authorList>
            <person name="Burkard T.R."/>
            <person name="Planyavsky M."/>
            <person name="Kaupe I."/>
            <person name="Breitwieser F.P."/>
            <person name="Buerckstuemmer T."/>
            <person name="Bennett K.L."/>
            <person name="Superti-Furga G."/>
            <person name="Colinge J."/>
        </authorList>
    </citation>
    <scope>IDENTIFICATION BY MASS SPECTROMETRY [LARGE SCALE ANALYSIS]</scope>
</reference>
<reference key="8">
    <citation type="journal article" date="2011" name="Sci. Signal.">
        <title>System-wide temporal characterization of the proteome and phosphoproteome of human embryonic stem cell differentiation.</title>
        <authorList>
            <person name="Rigbolt K.T."/>
            <person name="Prokhorova T.A."/>
            <person name="Akimov V."/>
            <person name="Henningsen J."/>
            <person name="Johansen P.T."/>
            <person name="Kratchmarova I."/>
            <person name="Kassem M."/>
            <person name="Mann M."/>
            <person name="Olsen J.V."/>
            <person name="Blagoev B."/>
        </authorList>
    </citation>
    <scope>PHOSPHORYLATION [LARGE SCALE ANALYSIS] AT SER-118</scope>
    <scope>IDENTIFICATION BY MASS SPECTROMETRY [LARGE SCALE ANALYSIS]</scope>
</reference>
<reference key="9">
    <citation type="journal article" date="2014" name="J. Proteomics">
        <title>An enzyme assisted RP-RPLC approach for in-depth analysis of human liver phosphoproteome.</title>
        <authorList>
            <person name="Bian Y."/>
            <person name="Song C."/>
            <person name="Cheng K."/>
            <person name="Dong M."/>
            <person name="Wang F."/>
            <person name="Huang J."/>
            <person name="Sun D."/>
            <person name="Wang L."/>
            <person name="Ye M."/>
            <person name="Zou H."/>
        </authorList>
    </citation>
    <scope>IDENTIFICATION BY MASS SPECTROMETRY [LARGE SCALE ANALYSIS]</scope>
    <source>
        <tissue>Liver</tissue>
    </source>
</reference>
<organism>
    <name type="scientific">Homo sapiens</name>
    <name type="common">Human</name>
    <dbReference type="NCBI Taxonomy" id="9606"/>
    <lineage>
        <taxon>Eukaryota</taxon>
        <taxon>Metazoa</taxon>
        <taxon>Chordata</taxon>
        <taxon>Craniata</taxon>
        <taxon>Vertebrata</taxon>
        <taxon>Euteleostomi</taxon>
        <taxon>Mammalia</taxon>
        <taxon>Eutheria</taxon>
        <taxon>Euarchontoglires</taxon>
        <taxon>Primates</taxon>
        <taxon>Haplorrhini</taxon>
        <taxon>Catarrhini</taxon>
        <taxon>Hominidae</taxon>
        <taxon>Homo</taxon>
    </lineage>
</organism>
<comment type="interaction">
    <interactant intactId="EBI-2512545">
        <id>Q6P5R6</id>
    </interactant>
    <interactant intactId="EBI-742426">
        <id>Q9H190</id>
        <label>SDCBP2</label>
    </interactant>
    <organismsDiffer>false</organismsDiffer>
    <experiments>3</experiments>
</comment>
<comment type="similarity">
    <text evidence="1">Belongs to the eukaryotic ribosomal protein eL22 family.</text>
</comment>
<comment type="sequence caution" evidence="1">
    <conflict type="erroneous initiation">
        <sequence resource="EMBL-CDS" id="AAH62731"/>
    </conflict>
</comment>
<protein>
    <recommendedName>
        <fullName evidence="1">Ribosomal protein eL22-like</fullName>
    </recommendedName>
    <alternativeName>
        <fullName>60S ribosomal protein L22-like 1</fullName>
    </alternativeName>
    <alternativeName>
        <fullName>Large ribosomal subunit protein eL22-like 1</fullName>
    </alternativeName>
</protein>
<gene>
    <name type="primary">RPL22L1</name>
</gene>
<sequence length="122" mass="14607">MAPQKDRKPKRSTWRFNLDLTHPVEDGIFDSGNFEQFLREKVKVNGKTGNLGNVVHIERFKNKITVVSEKQFSKRYLKYLTKKYLKKNNLRDWLRVVASDKETYELRYFQISQDEDESESED</sequence>
<feature type="chain" id="PRO_0000240632" description="Ribosomal protein eL22-like">
    <location>
        <begin position="1"/>
        <end position="122"/>
    </location>
</feature>
<feature type="modified residue" description="Phosphoserine" evidence="4">
    <location>
        <position position="112"/>
    </location>
</feature>
<feature type="modified residue" description="Phosphoserine" evidence="2 3 4 5">
    <location>
        <position position="118"/>
    </location>
</feature>
<feature type="modified residue" description="Phosphoserine" evidence="2">
    <location>
        <position position="120"/>
    </location>
</feature>
<feature type="sequence variant" id="VAR_061771" description="In dbSNP:rs13462.">
    <original>V</original>
    <variation>F</variation>
    <location>
        <position position="97"/>
    </location>
</feature>
<accession>Q6P5R6</accession>
<accession>Q32Q77</accession>
<keyword id="KW-0597">Phosphoprotein</keyword>
<keyword id="KW-1267">Proteomics identification</keyword>
<keyword id="KW-1185">Reference proteome</keyword>
<keyword id="KW-0687">Ribonucleoprotein</keyword>
<keyword id="KW-0689">Ribosomal protein</keyword>
<proteinExistence type="evidence at protein level"/>
<name>RL22L_HUMAN</name>